<sequence>MEMEYIRVAEDENEEPMEIPSEDDGTVLLSTVTAQFPGACGLRYRNPVNQCMRGVRLVEGILHAPENGWGNLVYVVNYPKDNKRKMDETDASSAVKIKRAVTKTSDLIVLGLPWKTTEQDLKDYFSTFGEVIMVQVKKDAKTGHSKGFGFVRFADYETQVKVMSQRHMIDGRWCDCKLPNSKSPDEPMRSRKVFVGRCTEDMSAEELRQFFSQYGEVVDVFIPKPFRAFAFVTFADDQVAQSLCGEDLIIKGVSVHVSTAEPKHNNNRQLERGGRFPGPSFGNQGYPNSRPSSGALGNNQGGNMGGGGGMNFGAFSINPAMMAAAQAALQSSWGMMGMLASQQNQSGPQGSNQGQGNQQRDQPQSFGSNNSYGSNSGAIGWGSPNAGSGSGFNGGFSSSMESKSSGWGM</sequence>
<protein>
    <recommendedName>
        <fullName>TAR DNA-binding protein 43</fullName>
        <shortName>TDP-43</shortName>
    </recommendedName>
</protein>
<gene>
    <name type="primary">tardbp</name>
    <name type="synonym">tdp43</name>
    <name type="ORF">TGas087d21.1</name>
</gene>
<comment type="function">
    <text evidence="2">Probably involved in transcriptional repression (By similarity). May play a role in the maintenance of the circadian clock periodicity.</text>
</comment>
<comment type="subunit">
    <text evidence="2">Homodimer.</text>
</comment>
<comment type="subcellular location">
    <subcellularLocation>
        <location evidence="2">Nucleus</location>
    </subcellularLocation>
    <subcellularLocation>
        <location evidence="2">Cytoplasm</location>
    </subcellularLocation>
    <subcellularLocation>
        <location evidence="2">Cytoplasm</location>
        <location evidence="2">Stress granule</location>
    </subcellularLocation>
    <subcellularLocation>
        <location evidence="2">Mitochondrion</location>
    </subcellularLocation>
    <text evidence="2">Continuously travels in and out of the nucleus. Localizes to stress granules in response to oxidative stress. A small subset localizes in mitochondria.</text>
</comment>
<comment type="domain">
    <text evidence="1">The RRM domains can bind to both DNA and RNA.</text>
</comment>
<comment type="caution">
    <text evidence="5">It is uncertain whether Met-1 or Met-3 is the initiator.</text>
</comment>
<comment type="sequence caution" evidence="5">
    <conflict type="erroneous initiation">
        <sequence resource="EMBL-CDS" id="AAH61336"/>
    </conflict>
</comment>
<reference key="1">
    <citation type="submission" date="2006-10" db="EMBL/GenBank/DDBJ databases">
        <authorList>
            <consortium name="Sanger Xenopus tropicalis EST/cDNA project"/>
        </authorList>
    </citation>
    <scope>NUCLEOTIDE SEQUENCE [LARGE SCALE MRNA]</scope>
    <source>
        <tissue>Gastrula</tissue>
    </source>
</reference>
<reference key="2">
    <citation type="submission" date="2003-11" db="EMBL/GenBank/DDBJ databases">
        <authorList>
            <consortium name="NIH - Xenopus Gene Collection (XGC) project"/>
        </authorList>
    </citation>
    <scope>NUCLEOTIDE SEQUENCE [LARGE SCALE MRNA]</scope>
    <source>
        <tissue>Embryo</tissue>
    </source>
</reference>
<organism>
    <name type="scientific">Xenopus tropicalis</name>
    <name type="common">Western clawed frog</name>
    <name type="synonym">Silurana tropicalis</name>
    <dbReference type="NCBI Taxonomy" id="8364"/>
    <lineage>
        <taxon>Eukaryota</taxon>
        <taxon>Metazoa</taxon>
        <taxon>Chordata</taxon>
        <taxon>Craniata</taxon>
        <taxon>Vertebrata</taxon>
        <taxon>Euteleostomi</taxon>
        <taxon>Amphibia</taxon>
        <taxon>Batrachia</taxon>
        <taxon>Anura</taxon>
        <taxon>Pipoidea</taxon>
        <taxon>Pipidae</taxon>
        <taxon>Xenopodinae</taxon>
        <taxon>Xenopus</taxon>
        <taxon>Silurana</taxon>
    </lineage>
</organism>
<feature type="chain" id="PRO_0000317417" description="TAR DNA-binding protein 43">
    <location>
        <begin position="1"/>
        <end position="409"/>
    </location>
</feature>
<feature type="domain" description="RRM 1" evidence="3">
    <location>
        <begin position="105"/>
        <end position="200"/>
    </location>
</feature>
<feature type="domain" description="RRM 2" evidence="3">
    <location>
        <begin position="191"/>
        <end position="262"/>
    </location>
</feature>
<feature type="region of interest" description="Disordered" evidence="4">
    <location>
        <begin position="260"/>
        <end position="302"/>
    </location>
</feature>
<feature type="region of interest" description="Disordered" evidence="4">
    <location>
        <begin position="341"/>
        <end position="409"/>
    </location>
</feature>
<feature type="compositionally biased region" description="Basic and acidic residues" evidence="4">
    <location>
        <begin position="261"/>
        <end position="274"/>
    </location>
</feature>
<feature type="compositionally biased region" description="Polar residues" evidence="4">
    <location>
        <begin position="281"/>
        <end position="292"/>
    </location>
</feature>
<feature type="compositionally biased region" description="Low complexity" evidence="4">
    <location>
        <begin position="341"/>
        <end position="387"/>
    </location>
</feature>
<feature type="compositionally biased region" description="Low complexity" evidence="4">
    <location>
        <begin position="395"/>
        <end position="409"/>
    </location>
</feature>
<keyword id="KW-0090">Biological rhythms</keyword>
<keyword id="KW-0963">Cytoplasm</keyword>
<keyword id="KW-0238">DNA-binding</keyword>
<keyword id="KW-0496">Mitochondrion</keyword>
<keyword id="KW-0507">mRNA processing</keyword>
<keyword id="KW-0508">mRNA splicing</keyword>
<keyword id="KW-0539">Nucleus</keyword>
<keyword id="KW-1185">Reference proteome</keyword>
<keyword id="KW-0677">Repeat</keyword>
<keyword id="KW-0678">Repressor</keyword>
<keyword id="KW-0694">RNA-binding</keyword>
<keyword id="KW-0804">Transcription</keyword>
<keyword id="KW-0805">Transcription regulation</keyword>
<dbReference type="EMBL" id="CR762161">
    <property type="protein sequence ID" value="CAJ81570.1"/>
    <property type="molecule type" value="mRNA"/>
</dbReference>
<dbReference type="EMBL" id="BC061336">
    <property type="protein sequence ID" value="AAH61336.1"/>
    <property type="status" value="ALT_INIT"/>
    <property type="molecule type" value="mRNA"/>
</dbReference>
<dbReference type="RefSeq" id="NP_989054.2">
    <property type="nucleotide sequence ID" value="NM_203723.2"/>
</dbReference>
<dbReference type="BMRB" id="Q28F51"/>
<dbReference type="SMR" id="Q28F51"/>
<dbReference type="FunCoup" id="Q28F51">
    <property type="interactions" value="5021"/>
</dbReference>
<dbReference type="STRING" id="8364.ENSXETP00000011689"/>
<dbReference type="PaxDb" id="8364-ENSXETP00000010789"/>
<dbReference type="DNASU" id="394651"/>
<dbReference type="GeneID" id="394651"/>
<dbReference type="KEGG" id="xtr:394651"/>
<dbReference type="AGR" id="Xenbase:XB-GENE-974453"/>
<dbReference type="CTD" id="23435"/>
<dbReference type="Xenbase" id="XB-GENE-974453">
    <property type="gene designation" value="tardbp"/>
</dbReference>
<dbReference type="eggNOG" id="ENOG502QPQ8">
    <property type="taxonomic scope" value="Eukaryota"/>
</dbReference>
<dbReference type="HOGENOM" id="CLU_012062_6_1_1"/>
<dbReference type="InParanoid" id="Q28F51"/>
<dbReference type="OMA" id="WGSASNP"/>
<dbReference type="OrthoDB" id="2020831at2759"/>
<dbReference type="Proteomes" id="UP000008143">
    <property type="component" value="Chromosome 7"/>
</dbReference>
<dbReference type="Bgee" id="ENSXETG00000006317">
    <property type="expression patterns" value="Expressed in ovary and 18 other cell types or tissues"/>
</dbReference>
<dbReference type="GO" id="GO:0010494">
    <property type="term" value="C:cytoplasmic stress granule"/>
    <property type="evidence" value="ECO:0007669"/>
    <property type="project" value="UniProtKB-SubCell"/>
</dbReference>
<dbReference type="GO" id="GO:0005739">
    <property type="term" value="C:mitochondrion"/>
    <property type="evidence" value="ECO:0007669"/>
    <property type="project" value="UniProtKB-SubCell"/>
</dbReference>
<dbReference type="GO" id="GO:0005634">
    <property type="term" value="C:nucleus"/>
    <property type="evidence" value="ECO:0007669"/>
    <property type="project" value="UniProtKB-SubCell"/>
</dbReference>
<dbReference type="GO" id="GO:0003677">
    <property type="term" value="F:DNA binding"/>
    <property type="evidence" value="ECO:0007669"/>
    <property type="project" value="UniProtKB-KW"/>
</dbReference>
<dbReference type="GO" id="GO:0003723">
    <property type="term" value="F:RNA binding"/>
    <property type="evidence" value="ECO:0007669"/>
    <property type="project" value="UniProtKB-KW"/>
</dbReference>
<dbReference type="GO" id="GO:0006397">
    <property type="term" value="P:mRNA processing"/>
    <property type="evidence" value="ECO:0007669"/>
    <property type="project" value="UniProtKB-KW"/>
</dbReference>
<dbReference type="GO" id="GO:0042752">
    <property type="term" value="P:regulation of circadian rhythm"/>
    <property type="evidence" value="ECO:0000250"/>
    <property type="project" value="UniProtKB"/>
</dbReference>
<dbReference type="GO" id="GO:0031647">
    <property type="term" value="P:regulation of protein stability"/>
    <property type="evidence" value="ECO:0000250"/>
    <property type="project" value="UniProtKB"/>
</dbReference>
<dbReference type="GO" id="GO:0048511">
    <property type="term" value="P:rhythmic process"/>
    <property type="evidence" value="ECO:0007669"/>
    <property type="project" value="UniProtKB-KW"/>
</dbReference>
<dbReference type="GO" id="GO:0008380">
    <property type="term" value="P:RNA splicing"/>
    <property type="evidence" value="ECO:0007669"/>
    <property type="project" value="UniProtKB-KW"/>
</dbReference>
<dbReference type="CDD" id="cd19609">
    <property type="entry name" value="NTD_TDP-43"/>
    <property type="match status" value="1"/>
</dbReference>
<dbReference type="CDD" id="cd12321">
    <property type="entry name" value="RRM1_TDP43"/>
    <property type="match status" value="1"/>
</dbReference>
<dbReference type="CDD" id="cd12322">
    <property type="entry name" value="RRM2_TDP43"/>
    <property type="match status" value="1"/>
</dbReference>
<dbReference type="FunFam" id="3.30.70.330:FF:000098">
    <property type="entry name" value="TAR DNA-binding protein 43"/>
    <property type="match status" value="1"/>
</dbReference>
<dbReference type="FunFam" id="3.30.70.330:FF:000107">
    <property type="entry name" value="TAR DNA-binding protein 43"/>
    <property type="match status" value="1"/>
</dbReference>
<dbReference type="Gene3D" id="3.30.70.330">
    <property type="match status" value="2"/>
</dbReference>
<dbReference type="InterPro" id="IPR012677">
    <property type="entry name" value="Nucleotide-bd_a/b_plait_sf"/>
</dbReference>
<dbReference type="InterPro" id="IPR035979">
    <property type="entry name" value="RBD_domain_sf"/>
</dbReference>
<dbReference type="InterPro" id="IPR000504">
    <property type="entry name" value="RRM_dom"/>
</dbReference>
<dbReference type="InterPro" id="IPR049124">
    <property type="entry name" value="TDP-43_C"/>
</dbReference>
<dbReference type="InterPro" id="IPR041105">
    <property type="entry name" value="TDP-43_N"/>
</dbReference>
<dbReference type="PANTHER" id="PTHR48033">
    <property type="entry name" value="RNA-BINDING (RRM/RBD/RNP MOTIFS) FAMILY PROTEIN"/>
    <property type="match status" value="1"/>
</dbReference>
<dbReference type="PANTHER" id="PTHR48033:SF9">
    <property type="entry name" value="TAR DNA-BINDING PROTEIN 43"/>
    <property type="match status" value="1"/>
</dbReference>
<dbReference type="Pfam" id="PF00076">
    <property type="entry name" value="RRM_1"/>
    <property type="match status" value="2"/>
</dbReference>
<dbReference type="Pfam" id="PF20910">
    <property type="entry name" value="TDP-43_C"/>
    <property type="match status" value="1"/>
</dbReference>
<dbReference type="Pfam" id="PF18694">
    <property type="entry name" value="TDP-43_N"/>
    <property type="match status" value="1"/>
</dbReference>
<dbReference type="SMART" id="SM00360">
    <property type="entry name" value="RRM"/>
    <property type="match status" value="2"/>
</dbReference>
<dbReference type="SUPFAM" id="SSF54928">
    <property type="entry name" value="RNA-binding domain, RBD"/>
    <property type="match status" value="1"/>
</dbReference>
<dbReference type="PROSITE" id="PS50102">
    <property type="entry name" value="RRM"/>
    <property type="match status" value="2"/>
</dbReference>
<accession>Q28F51</accession>
<accession>Q6P893</accession>
<name>TADBP_XENTR</name>
<proteinExistence type="evidence at transcript level"/>
<evidence type="ECO:0000250" key="1"/>
<evidence type="ECO:0000250" key="2">
    <source>
        <dbReference type="UniProtKB" id="Q13148"/>
    </source>
</evidence>
<evidence type="ECO:0000255" key="3">
    <source>
        <dbReference type="PROSITE-ProRule" id="PRU00176"/>
    </source>
</evidence>
<evidence type="ECO:0000256" key="4">
    <source>
        <dbReference type="SAM" id="MobiDB-lite"/>
    </source>
</evidence>
<evidence type="ECO:0000305" key="5"/>